<accession>A0A5B8YU68</accession>
<keyword id="KW-0521">NADP</keyword>
<keyword id="KW-0560">Oxidoreductase</keyword>
<organism>
    <name type="scientific">Pestalotiopsis microspora</name>
    <dbReference type="NCBI Taxonomy" id="85828"/>
    <lineage>
        <taxon>Eukaryota</taxon>
        <taxon>Fungi</taxon>
        <taxon>Dikarya</taxon>
        <taxon>Ascomycota</taxon>
        <taxon>Pezizomycotina</taxon>
        <taxon>Sordariomycetes</taxon>
        <taxon>Xylariomycetidae</taxon>
        <taxon>Amphisphaeriales</taxon>
        <taxon>Sporocadaceae</taxon>
        <taxon>Pestalotiopsis</taxon>
    </lineage>
</organism>
<evidence type="ECO:0000250" key="1">
    <source>
        <dbReference type="UniProtKB" id="L0E2Z4"/>
    </source>
</evidence>
<evidence type="ECO:0000250" key="2">
    <source>
        <dbReference type="UniProtKB" id="O93868"/>
    </source>
</evidence>
<evidence type="ECO:0000255" key="3">
    <source>
        <dbReference type="PROSITE-ProRule" id="PRU10001"/>
    </source>
</evidence>
<evidence type="ECO:0000269" key="4">
    <source>
    </source>
</evidence>
<evidence type="ECO:0000269" key="5">
    <source>
    </source>
</evidence>
<evidence type="ECO:0000303" key="6">
    <source>
    </source>
</evidence>
<evidence type="ECO:0000305" key="7"/>
<evidence type="ECO:0000305" key="8">
    <source>
    </source>
</evidence>
<gene>
    <name evidence="6" type="ORF">GME11361</name>
</gene>
<feature type="chain" id="PRO_0000456732" description="Short-chain dehydrogenase/reductase GME11361">
    <location>
        <begin position="1"/>
        <end position="267"/>
    </location>
</feature>
<feature type="active site" description="Proton acceptor" evidence="3">
    <location>
        <position position="129"/>
    </location>
</feature>
<feature type="active site" description="Lowers pKa of active site Tyr" evidence="2">
    <location>
        <position position="133"/>
    </location>
</feature>
<feature type="binding site" evidence="1">
    <location>
        <position position="10"/>
    </location>
    <ligand>
        <name>NADP(+)</name>
        <dbReference type="ChEBI" id="CHEBI:58349"/>
    </ligand>
</feature>
<feature type="binding site" evidence="1">
    <location>
        <position position="36"/>
    </location>
    <ligand>
        <name>NADP(+)</name>
        <dbReference type="ChEBI" id="CHEBI:58349"/>
    </ligand>
</feature>
<feature type="binding site" evidence="1">
    <location>
        <position position="42"/>
    </location>
    <ligand>
        <name>NADP(+)</name>
        <dbReference type="ChEBI" id="CHEBI:58349"/>
    </ligand>
</feature>
<feature type="binding site" evidence="1">
    <location>
        <position position="57"/>
    </location>
    <ligand>
        <name>NADP(+)</name>
        <dbReference type="ChEBI" id="CHEBI:58349"/>
    </ligand>
</feature>
<feature type="binding site" evidence="2">
    <location>
        <position position="80"/>
    </location>
    <ligand>
        <name>NADP(+)</name>
        <dbReference type="ChEBI" id="CHEBI:58349"/>
    </ligand>
</feature>
<feature type="binding site" evidence="2">
    <location>
        <position position="129"/>
    </location>
    <ligand>
        <name>NADP(+)</name>
        <dbReference type="ChEBI" id="CHEBI:58349"/>
    </ligand>
</feature>
<feature type="binding site" evidence="2">
    <location>
        <position position="133"/>
    </location>
    <ligand>
        <name>NADP(+)</name>
        <dbReference type="ChEBI" id="CHEBI:58349"/>
    </ligand>
</feature>
<feature type="binding site" evidence="2">
    <location>
        <position position="162"/>
    </location>
    <ligand>
        <name>NADP(+)</name>
        <dbReference type="ChEBI" id="CHEBI:58349"/>
    </ligand>
</feature>
<feature type="binding site" evidence="1">
    <location>
        <position position="164"/>
    </location>
    <ligand>
        <name>NADP(+)</name>
        <dbReference type="ChEBI" id="CHEBI:58349"/>
    </ligand>
</feature>
<proteinExistence type="evidence at transcript level"/>
<reference key="1">
    <citation type="journal article" date="2019" name="J. Microbiol. Biotechnol.">
        <title>A gene cluster for the biosynthesis of dibenzodioxocinons in the endophyte Pestalotiopsis microspora, a taxol producer.</title>
        <authorList>
            <person name="Liu Y."/>
            <person name="Chen L."/>
            <person name="Xie Q."/>
            <person name="Yu X."/>
            <person name="Duan A."/>
            <person name="Lin Y."/>
            <person name="Xiang B."/>
            <person name="Hao X."/>
            <person name="Chen W."/>
            <person name="Zhu X."/>
        </authorList>
    </citation>
    <scope>NUCLEOTIDE SEQUENCE [MRNA]</scope>
    <scope>FUNCTION</scope>
    <scope>PATHWAY</scope>
    <source>
        <strain>NK17</strain>
    </source>
</reference>
<reference key="2">
    <citation type="journal article" date="2022" name="Microbiol. Res.">
        <title>Acquiring novel chemicals by overexpression of a transcription factor DibT in the dibenzodioxocinone biosynthetic cluster in Pestalotiopsis microspora.</title>
        <authorList>
            <person name="Liu Y."/>
            <person name="Fu Y."/>
            <person name="Zhou M."/>
            <person name="Hao X."/>
            <person name="Zhang P."/>
            <person name="Zhu X."/>
        </authorList>
    </citation>
    <scope>INDUCTION</scope>
</reference>
<name>GME61_PESMI</name>
<dbReference type="EC" id="1.1.1.-" evidence="8"/>
<dbReference type="EMBL" id="MK590980">
    <property type="protein sequence ID" value="QED41492.1"/>
    <property type="molecule type" value="mRNA"/>
</dbReference>
<dbReference type="SMR" id="A0A5B8YU68"/>
<dbReference type="GO" id="GO:0005783">
    <property type="term" value="C:endoplasmic reticulum"/>
    <property type="evidence" value="ECO:0007669"/>
    <property type="project" value="TreeGrafter"/>
</dbReference>
<dbReference type="GO" id="GO:0005811">
    <property type="term" value="C:lipid droplet"/>
    <property type="evidence" value="ECO:0007669"/>
    <property type="project" value="TreeGrafter"/>
</dbReference>
<dbReference type="GO" id="GO:0000140">
    <property type="term" value="F:acylglycerone-phosphate reductase (NADP+) activity"/>
    <property type="evidence" value="ECO:0007669"/>
    <property type="project" value="TreeGrafter"/>
</dbReference>
<dbReference type="GO" id="GO:0004806">
    <property type="term" value="F:triacylglycerol lipase activity"/>
    <property type="evidence" value="ECO:0007669"/>
    <property type="project" value="TreeGrafter"/>
</dbReference>
<dbReference type="GO" id="GO:0006654">
    <property type="term" value="P:phosphatidic acid biosynthetic process"/>
    <property type="evidence" value="ECO:0007669"/>
    <property type="project" value="TreeGrafter"/>
</dbReference>
<dbReference type="GO" id="GO:0019433">
    <property type="term" value="P:triglyceride catabolic process"/>
    <property type="evidence" value="ECO:0007669"/>
    <property type="project" value="TreeGrafter"/>
</dbReference>
<dbReference type="Gene3D" id="3.40.50.720">
    <property type="entry name" value="NAD(P)-binding Rossmann-like Domain"/>
    <property type="match status" value="1"/>
</dbReference>
<dbReference type="InterPro" id="IPR036291">
    <property type="entry name" value="NAD(P)-bd_dom_sf"/>
</dbReference>
<dbReference type="InterPro" id="IPR020904">
    <property type="entry name" value="Sc_DH/Rdtase_CS"/>
</dbReference>
<dbReference type="InterPro" id="IPR002347">
    <property type="entry name" value="SDR_fam"/>
</dbReference>
<dbReference type="PANTHER" id="PTHR44169">
    <property type="entry name" value="NADPH-DEPENDENT 1-ACYLDIHYDROXYACETONE PHOSPHATE REDUCTASE"/>
    <property type="match status" value="1"/>
</dbReference>
<dbReference type="PANTHER" id="PTHR44169:SF6">
    <property type="entry name" value="NADPH-DEPENDENT 1-ACYLDIHYDROXYACETONE PHOSPHATE REDUCTASE"/>
    <property type="match status" value="1"/>
</dbReference>
<dbReference type="Pfam" id="PF00106">
    <property type="entry name" value="adh_short"/>
    <property type="match status" value="1"/>
</dbReference>
<dbReference type="PRINTS" id="PR00081">
    <property type="entry name" value="GDHRDH"/>
</dbReference>
<dbReference type="PRINTS" id="PR00080">
    <property type="entry name" value="SDRFAMILY"/>
</dbReference>
<dbReference type="SUPFAM" id="SSF51735">
    <property type="entry name" value="NAD(P)-binding Rossmann-fold domains"/>
    <property type="match status" value="1"/>
</dbReference>
<dbReference type="PROSITE" id="PS00061">
    <property type="entry name" value="ADH_SHORT"/>
    <property type="match status" value="1"/>
</dbReference>
<comment type="function">
    <text evidence="4 8">Short-chain dehydrogenase/reductase; part of the gene cluster that mediates the biosynthesis of dibenzodioxocinones such as pestalotiollide B, a novel class of inhibitors against cholesterol ester transfer protein (CEPT) (PubMed:31474098). The biosynthesis initiates from condensation of acetate and malonate units catalyzed by the non-reducing PKS pks8/GME11356. Pks8/GME11356 lacks a thioesterase (TE) domain, which is important to the cyclizing of the third ring of atrochrysone carboxylic acid, and the esterase GME11355 might play the role of TE and catalyzes the cyclization reaction of the C ring. The lactamase-like protein GME11357 (or other beta-lactamases in Pestalotiopsis microspora) probably hydrolyzes the thioester bond between the ACP of pks8/GME11356 and the intermediate to release atrochrysone carboxylic acid, which is spontaneously dehydrates to form endocrocin anthrone. Endocrocin anthrone is further converted to emodin via the endocrocin intermediate. Emodin is then oxidized by several enzymes such as the Baeyer-Villiger oxidase GME11358, the oxidoreductase GME11367, the short chain dehydrogenase/reductase GME11373, as well as by other oxidoreductases from the cluster, to modify the A and C rings and open the B ring, and finally yield monodictyphenone. The prenyltransferase GME11375 may catalyze the addition reaction between the C5 side chains and the carbon bone of dibenzodioxocinones. The remaining biochemical reactions to the final product dibenzodioxocinones should be methylation catalyzed by methyltransferase GME11366 and reduction and lactonization reaction catalyzed by a series of oxidordeuctases (Probable).</text>
</comment>
<comment type="pathway">
    <text evidence="8">Secondary metabolite biosynthesis.</text>
</comment>
<comment type="induction">
    <text evidence="5">The expression of the dibenzodioxocinones biosynthesis cluster is positively regulated by the transcription factor dibT.</text>
</comment>
<comment type="similarity">
    <text evidence="7">Belongs to the short-chain dehydrogenases/reductases (SDR) family.</text>
</comment>
<protein>
    <recommendedName>
        <fullName evidence="6">Short-chain dehydrogenase/reductase GME11361</fullName>
        <ecNumber evidence="8">1.1.1.-</ecNumber>
    </recommendedName>
    <alternativeName>
        <fullName evidence="6">Dibenzodioxocinones biosynthesis cluster protein GME11361</fullName>
    </alternativeName>
</protein>
<sequence length="267" mass="28550">MVSAKKTVLITGCSEGGMGAALAVAFKEAGFRVYATARDPSKMASLSRAGIETLTLDILSSESIATCASSVSSLDILVNNAGSSYSMPVADMDINYAKQLFDVNVWAQLAVSQAFLPHLIKSKGMISAYNASKAAISMFSDCQRLELEPFGVKVIDLKTGAVASNLIKNQKTLTPITLPRDSIYEPARDAVEAAMRNDKMADVGTPANQWAKEVVGDLTRKSPPLVIWRGANAKLGRFGTIMPHGMMDSTIKKMTGLDVVEQKVRVA</sequence>